<proteinExistence type="inferred from homology"/>
<protein>
    <recommendedName>
        <fullName evidence="1">1-deoxy-D-xylulose-5-phosphate synthase</fullName>
        <ecNumber evidence="1">2.2.1.7</ecNumber>
    </recommendedName>
    <alternativeName>
        <fullName evidence="1">1-deoxyxylulose-5-phosphate synthase</fullName>
        <shortName evidence="1">DXP synthase</shortName>
        <shortName evidence="1">DXPS</shortName>
    </alternativeName>
</protein>
<reference key="1">
    <citation type="journal article" date="2008" name="J. Bacteriol.">
        <title>Complete genome sequence of uropathogenic Proteus mirabilis, a master of both adherence and motility.</title>
        <authorList>
            <person name="Pearson M.M."/>
            <person name="Sebaihia M."/>
            <person name="Churcher C."/>
            <person name="Quail M.A."/>
            <person name="Seshasayee A.S."/>
            <person name="Luscombe N.M."/>
            <person name="Abdellah Z."/>
            <person name="Arrosmith C."/>
            <person name="Atkin B."/>
            <person name="Chillingworth T."/>
            <person name="Hauser H."/>
            <person name="Jagels K."/>
            <person name="Moule S."/>
            <person name="Mungall K."/>
            <person name="Norbertczak H."/>
            <person name="Rabbinowitsch E."/>
            <person name="Walker D."/>
            <person name="Whithead S."/>
            <person name="Thomson N.R."/>
            <person name="Rather P.N."/>
            <person name="Parkhill J."/>
            <person name="Mobley H.L.T."/>
        </authorList>
    </citation>
    <scope>NUCLEOTIDE SEQUENCE [LARGE SCALE GENOMIC DNA]</scope>
    <source>
        <strain>HI4320</strain>
    </source>
</reference>
<keyword id="KW-0414">Isoprene biosynthesis</keyword>
<keyword id="KW-0460">Magnesium</keyword>
<keyword id="KW-0479">Metal-binding</keyword>
<keyword id="KW-1185">Reference proteome</keyword>
<keyword id="KW-0784">Thiamine biosynthesis</keyword>
<keyword id="KW-0786">Thiamine pyrophosphate</keyword>
<keyword id="KW-0808">Transferase</keyword>
<feature type="chain" id="PRO_1000115757" description="1-deoxy-D-xylulose-5-phosphate synthase">
    <location>
        <begin position="1"/>
        <end position="624"/>
    </location>
</feature>
<feature type="binding site" evidence="1">
    <location>
        <position position="80"/>
    </location>
    <ligand>
        <name>thiamine diphosphate</name>
        <dbReference type="ChEBI" id="CHEBI:58937"/>
    </ligand>
</feature>
<feature type="binding site" evidence="1">
    <location>
        <begin position="121"/>
        <end position="123"/>
    </location>
    <ligand>
        <name>thiamine diphosphate</name>
        <dbReference type="ChEBI" id="CHEBI:58937"/>
    </ligand>
</feature>
<feature type="binding site" evidence="1">
    <location>
        <position position="152"/>
    </location>
    <ligand>
        <name>Mg(2+)</name>
        <dbReference type="ChEBI" id="CHEBI:18420"/>
    </ligand>
</feature>
<feature type="binding site" evidence="1">
    <location>
        <begin position="153"/>
        <end position="154"/>
    </location>
    <ligand>
        <name>thiamine diphosphate</name>
        <dbReference type="ChEBI" id="CHEBI:58937"/>
    </ligand>
</feature>
<feature type="binding site" evidence="1">
    <location>
        <position position="181"/>
    </location>
    <ligand>
        <name>Mg(2+)</name>
        <dbReference type="ChEBI" id="CHEBI:18420"/>
    </ligand>
</feature>
<feature type="binding site" evidence="1">
    <location>
        <position position="181"/>
    </location>
    <ligand>
        <name>thiamine diphosphate</name>
        <dbReference type="ChEBI" id="CHEBI:58937"/>
    </ligand>
</feature>
<feature type="binding site" evidence="1">
    <location>
        <position position="288"/>
    </location>
    <ligand>
        <name>thiamine diphosphate</name>
        <dbReference type="ChEBI" id="CHEBI:58937"/>
    </ligand>
</feature>
<feature type="binding site" evidence="1">
    <location>
        <position position="370"/>
    </location>
    <ligand>
        <name>thiamine diphosphate</name>
        <dbReference type="ChEBI" id="CHEBI:58937"/>
    </ligand>
</feature>
<gene>
    <name evidence="1" type="primary">dxs</name>
    <name type="ordered locus">PMI0094</name>
</gene>
<organism>
    <name type="scientific">Proteus mirabilis (strain HI4320)</name>
    <dbReference type="NCBI Taxonomy" id="529507"/>
    <lineage>
        <taxon>Bacteria</taxon>
        <taxon>Pseudomonadati</taxon>
        <taxon>Pseudomonadota</taxon>
        <taxon>Gammaproteobacteria</taxon>
        <taxon>Enterobacterales</taxon>
        <taxon>Morganellaceae</taxon>
        <taxon>Proteus</taxon>
    </lineage>
</organism>
<dbReference type="EC" id="2.2.1.7" evidence="1"/>
<dbReference type="EMBL" id="AM942759">
    <property type="protein sequence ID" value="CAR40354.1"/>
    <property type="molecule type" value="Genomic_DNA"/>
</dbReference>
<dbReference type="RefSeq" id="WP_012367473.1">
    <property type="nucleotide sequence ID" value="NC_010554.1"/>
</dbReference>
<dbReference type="SMR" id="B4EU31"/>
<dbReference type="EnsemblBacteria" id="CAR40354">
    <property type="protein sequence ID" value="CAR40354"/>
    <property type="gene ID" value="PMI0094"/>
</dbReference>
<dbReference type="GeneID" id="6801365"/>
<dbReference type="KEGG" id="pmr:PMI0094"/>
<dbReference type="PATRIC" id="fig|529507.6.peg.93"/>
<dbReference type="eggNOG" id="COG1154">
    <property type="taxonomic scope" value="Bacteria"/>
</dbReference>
<dbReference type="HOGENOM" id="CLU_009227_1_4_6"/>
<dbReference type="UniPathway" id="UPA00064">
    <property type="reaction ID" value="UER00091"/>
</dbReference>
<dbReference type="Proteomes" id="UP000008319">
    <property type="component" value="Chromosome"/>
</dbReference>
<dbReference type="GO" id="GO:0005829">
    <property type="term" value="C:cytosol"/>
    <property type="evidence" value="ECO:0007669"/>
    <property type="project" value="TreeGrafter"/>
</dbReference>
<dbReference type="GO" id="GO:0008661">
    <property type="term" value="F:1-deoxy-D-xylulose-5-phosphate synthase activity"/>
    <property type="evidence" value="ECO:0007669"/>
    <property type="project" value="UniProtKB-UniRule"/>
</dbReference>
<dbReference type="GO" id="GO:0000287">
    <property type="term" value="F:magnesium ion binding"/>
    <property type="evidence" value="ECO:0007669"/>
    <property type="project" value="UniProtKB-UniRule"/>
</dbReference>
<dbReference type="GO" id="GO:0030976">
    <property type="term" value="F:thiamine pyrophosphate binding"/>
    <property type="evidence" value="ECO:0007669"/>
    <property type="project" value="UniProtKB-UniRule"/>
</dbReference>
<dbReference type="GO" id="GO:0052865">
    <property type="term" value="P:1-deoxy-D-xylulose 5-phosphate biosynthetic process"/>
    <property type="evidence" value="ECO:0007669"/>
    <property type="project" value="UniProtKB-UniPathway"/>
</dbReference>
<dbReference type="GO" id="GO:0019288">
    <property type="term" value="P:isopentenyl diphosphate biosynthetic process, methylerythritol 4-phosphate pathway"/>
    <property type="evidence" value="ECO:0007669"/>
    <property type="project" value="TreeGrafter"/>
</dbReference>
<dbReference type="GO" id="GO:0016114">
    <property type="term" value="P:terpenoid biosynthetic process"/>
    <property type="evidence" value="ECO:0007669"/>
    <property type="project" value="UniProtKB-UniRule"/>
</dbReference>
<dbReference type="GO" id="GO:0009228">
    <property type="term" value="P:thiamine biosynthetic process"/>
    <property type="evidence" value="ECO:0007669"/>
    <property type="project" value="UniProtKB-UniRule"/>
</dbReference>
<dbReference type="CDD" id="cd02007">
    <property type="entry name" value="TPP_DXS"/>
    <property type="match status" value="1"/>
</dbReference>
<dbReference type="CDD" id="cd07033">
    <property type="entry name" value="TPP_PYR_DXS_TK_like"/>
    <property type="match status" value="1"/>
</dbReference>
<dbReference type="FunFam" id="3.40.50.920:FF:000002">
    <property type="entry name" value="1-deoxy-D-xylulose-5-phosphate synthase"/>
    <property type="match status" value="1"/>
</dbReference>
<dbReference type="FunFam" id="3.40.50.970:FF:000005">
    <property type="entry name" value="1-deoxy-D-xylulose-5-phosphate synthase"/>
    <property type="match status" value="1"/>
</dbReference>
<dbReference type="Gene3D" id="3.40.50.920">
    <property type="match status" value="1"/>
</dbReference>
<dbReference type="Gene3D" id="3.40.50.970">
    <property type="match status" value="2"/>
</dbReference>
<dbReference type="HAMAP" id="MF_00315">
    <property type="entry name" value="DXP_synth"/>
    <property type="match status" value="1"/>
</dbReference>
<dbReference type="InterPro" id="IPR005477">
    <property type="entry name" value="Dxylulose-5-P_synthase"/>
</dbReference>
<dbReference type="InterPro" id="IPR029061">
    <property type="entry name" value="THDP-binding"/>
</dbReference>
<dbReference type="InterPro" id="IPR009014">
    <property type="entry name" value="Transketo_C/PFOR_II"/>
</dbReference>
<dbReference type="InterPro" id="IPR005475">
    <property type="entry name" value="Transketolase-like_Pyr-bd"/>
</dbReference>
<dbReference type="InterPro" id="IPR020826">
    <property type="entry name" value="Transketolase_BS"/>
</dbReference>
<dbReference type="InterPro" id="IPR033248">
    <property type="entry name" value="Transketolase_C"/>
</dbReference>
<dbReference type="InterPro" id="IPR049557">
    <property type="entry name" value="Transketolase_CS"/>
</dbReference>
<dbReference type="NCBIfam" id="TIGR00204">
    <property type="entry name" value="dxs"/>
    <property type="match status" value="1"/>
</dbReference>
<dbReference type="NCBIfam" id="NF003933">
    <property type="entry name" value="PRK05444.2-2"/>
    <property type="match status" value="1"/>
</dbReference>
<dbReference type="PANTHER" id="PTHR43322">
    <property type="entry name" value="1-D-DEOXYXYLULOSE 5-PHOSPHATE SYNTHASE-RELATED"/>
    <property type="match status" value="1"/>
</dbReference>
<dbReference type="PANTHER" id="PTHR43322:SF5">
    <property type="entry name" value="1-DEOXY-D-XYLULOSE-5-PHOSPHATE SYNTHASE, CHLOROPLASTIC"/>
    <property type="match status" value="1"/>
</dbReference>
<dbReference type="Pfam" id="PF13292">
    <property type="entry name" value="DXP_synthase_N"/>
    <property type="match status" value="1"/>
</dbReference>
<dbReference type="Pfam" id="PF02779">
    <property type="entry name" value="Transket_pyr"/>
    <property type="match status" value="1"/>
</dbReference>
<dbReference type="Pfam" id="PF02780">
    <property type="entry name" value="Transketolase_C"/>
    <property type="match status" value="1"/>
</dbReference>
<dbReference type="SMART" id="SM00861">
    <property type="entry name" value="Transket_pyr"/>
    <property type="match status" value="1"/>
</dbReference>
<dbReference type="SUPFAM" id="SSF52518">
    <property type="entry name" value="Thiamin diphosphate-binding fold (THDP-binding)"/>
    <property type="match status" value="2"/>
</dbReference>
<dbReference type="SUPFAM" id="SSF52922">
    <property type="entry name" value="TK C-terminal domain-like"/>
    <property type="match status" value="1"/>
</dbReference>
<dbReference type="PROSITE" id="PS00801">
    <property type="entry name" value="TRANSKETOLASE_1"/>
    <property type="match status" value="1"/>
</dbReference>
<dbReference type="PROSITE" id="PS00802">
    <property type="entry name" value="TRANSKETOLASE_2"/>
    <property type="match status" value="1"/>
</dbReference>
<evidence type="ECO:0000255" key="1">
    <source>
        <dbReference type="HAMAP-Rule" id="MF_00315"/>
    </source>
</evidence>
<name>DXS_PROMH</name>
<sequence>MSIDIEKYPTLALVETPEDLRLLPKESLPKLCDELRLYLLNSVSRSSGHFASGLGAIELTVALHYVYKTPFDNLIWDVGHQAYPHKILTGRRDRIDTIRQKNGLHPFPWRDESEYDKLCVGHSSTSISAGLGMAVAAEQENLGRKTVCVIGDGAITAGMAFEAMNHAGDINPDMLVVLNDNEMSISENVGALNNHLAQLLSGKLYTTLREGGKKVFSGIPPIKELLKKTEEHIKGMVVPGTMFEELGFNYIGPVDGHDVIALVQTLTNMRDLKGPQLLHIMTKKGRGYAPAEQDPISWHAVPKFDPKTGTLPKSPNARPTFSKIFGDWLCEEAATDEKLMAITPAMREGSGMVRFSKEYPAQYFDVAIAEQHAVTFAAGLAIGGYKPIVAIYSTFLQRAYDQVIHDVAIQKLPVLFAIDRGGIVGADGQTHQGAFDLSFLRCIPNMIIMAPSDENECRQMLHTGYHYQEGPVAVRYPRGSGVGAPLQPLSELPIGKGIIRRQGKSIAILNFGTLLPEALDVAEKLDATVADMRFIKPLDKELILSLAKQHDILVTLEENAIMGGAGSGVNELLMQERCLVPVLNLGLPDLFVPQGGQEEIRADLGLDATGIEKSIKAYQAHSLR</sequence>
<accession>B4EU31</accession>
<comment type="function">
    <text evidence="1">Catalyzes the acyloin condensation reaction between C atoms 2 and 3 of pyruvate and glyceraldehyde 3-phosphate to yield 1-deoxy-D-xylulose-5-phosphate (DXP).</text>
</comment>
<comment type="catalytic activity">
    <reaction evidence="1">
        <text>D-glyceraldehyde 3-phosphate + pyruvate + H(+) = 1-deoxy-D-xylulose 5-phosphate + CO2</text>
        <dbReference type="Rhea" id="RHEA:12605"/>
        <dbReference type="ChEBI" id="CHEBI:15361"/>
        <dbReference type="ChEBI" id="CHEBI:15378"/>
        <dbReference type="ChEBI" id="CHEBI:16526"/>
        <dbReference type="ChEBI" id="CHEBI:57792"/>
        <dbReference type="ChEBI" id="CHEBI:59776"/>
        <dbReference type="EC" id="2.2.1.7"/>
    </reaction>
</comment>
<comment type="cofactor">
    <cofactor evidence="1">
        <name>Mg(2+)</name>
        <dbReference type="ChEBI" id="CHEBI:18420"/>
    </cofactor>
    <text evidence="1">Binds 1 Mg(2+) ion per subunit.</text>
</comment>
<comment type="cofactor">
    <cofactor evidence="1">
        <name>thiamine diphosphate</name>
        <dbReference type="ChEBI" id="CHEBI:58937"/>
    </cofactor>
    <text evidence="1">Binds 1 thiamine pyrophosphate per subunit.</text>
</comment>
<comment type="pathway">
    <text evidence="1">Metabolic intermediate biosynthesis; 1-deoxy-D-xylulose 5-phosphate biosynthesis; 1-deoxy-D-xylulose 5-phosphate from D-glyceraldehyde 3-phosphate and pyruvate: step 1/1.</text>
</comment>
<comment type="subunit">
    <text evidence="1">Homodimer.</text>
</comment>
<comment type="similarity">
    <text evidence="1">Belongs to the transketolase family. DXPS subfamily.</text>
</comment>